<comment type="function">
    <text evidence="1">The UvrABC repair system catalyzes the recognition and processing of DNA lesions. A damage recognition complex composed of 2 UvrA and 2 UvrB subunits scans DNA for abnormalities. Upon binding of the UvrA(2)B(2) complex to a putative damaged site, the DNA wraps around one UvrB monomer. DNA wrap is dependent on ATP binding by UvrB and probably causes local melting of the DNA helix, facilitating insertion of UvrB beta-hairpin between the DNA strands. Then UvrB probes one DNA strand for the presence of a lesion. If a lesion is found the UvrA subunits dissociate and the UvrB-DNA preincision complex is formed. This complex is subsequently bound by UvrC and the second UvrB is released. If no lesion is found, the DNA wraps around the other UvrB subunit that will check the other stand for damage.</text>
</comment>
<comment type="subunit">
    <text evidence="1">Forms a heterotetramer with UvrA during the search for lesions. Interacts with UvrC in an incision complex.</text>
</comment>
<comment type="subcellular location">
    <subcellularLocation>
        <location evidence="1">Cytoplasm</location>
    </subcellularLocation>
</comment>
<comment type="domain">
    <text evidence="1">The beta-hairpin motif is involved in DNA binding.</text>
</comment>
<comment type="similarity">
    <text evidence="1">Belongs to the UvrB family.</text>
</comment>
<sequence>MSKYYLKAPYQPKGDQPKAITKLVDGVNSGREYQTLLGATGTGKTFTIANVIAKTGRPALVLAHNKTLAAQLCNELREFFPNNAVEYFISYYDYYQPEAYVPVSDTYIAKTSSINEEIDMLRHSATRSLFERDDVIVVASISCIYGLGIPSEYLKASVKFKVGNEINLRKSLRELVANQYFRNDFDIGRGKFRVKGDVLEIGPAYDDRLVRIELFGDEIEAIRYVDPITGEILDSLNCISIYPAKHFVTPKERLVTAIDDIQKELKEQLDFFNKEGKLLEAQRLEQRTKYDLEMLREVGYCNGVENYARHLSGREAGSPPECLIDYFPKDWLLVIDESHVTCSQLLAMYNGDQSRKKVLIEHGFRLPSAADNRPLKSQEFWNKANQTVFISATPGNWELEISSGAIIEQVIRPTGVLDPLVEVRPTKGQVEDLLDEIRERSRKKQRVLITTLTKRMAEDLTDYLSENDVRVRYLHSEIHSIERIEIIQDLRMGEYDVLVGVNLLREGLDLPEVSLVVILDADKEGFLRAERSLIQTIGRAARHIEGKALLYADNFTDSMKKAIEETERRRAIQESYNQQNNIVPMPAGKKANNSILSFLELSRRVQKDGIDNDLVEIAGNVVDEFKFNNNSELAIENLPQLIDELETKMKKSAKDLDFENAAKLRDKIHQLRKKLIR</sequence>
<evidence type="ECO:0000255" key="1">
    <source>
        <dbReference type="HAMAP-Rule" id="MF_00204"/>
    </source>
</evidence>
<protein>
    <recommendedName>
        <fullName evidence="1">UvrABC system protein B</fullName>
        <shortName evidence="1">Protein UvrB</shortName>
    </recommendedName>
    <alternativeName>
        <fullName evidence="1">Excinuclease ABC subunit B</fullName>
    </alternativeName>
</protein>
<proteinExistence type="inferred from homology"/>
<feature type="chain" id="PRO_0000227341" description="UvrABC system protein B">
    <location>
        <begin position="1"/>
        <end position="677"/>
    </location>
</feature>
<feature type="domain" description="Helicase ATP-binding" evidence="1">
    <location>
        <begin position="25"/>
        <end position="412"/>
    </location>
</feature>
<feature type="domain" description="Helicase C-terminal" evidence="1">
    <location>
        <begin position="429"/>
        <end position="591"/>
    </location>
</feature>
<feature type="domain" description="UVR" evidence="1">
    <location>
        <begin position="639"/>
        <end position="674"/>
    </location>
</feature>
<feature type="short sequence motif" description="Beta-hairpin">
    <location>
        <begin position="91"/>
        <end position="114"/>
    </location>
</feature>
<feature type="binding site" evidence="1">
    <location>
        <begin position="38"/>
        <end position="45"/>
    </location>
    <ligand>
        <name>ATP</name>
        <dbReference type="ChEBI" id="CHEBI:30616"/>
    </ligand>
</feature>
<dbReference type="EMBL" id="AE017126">
    <property type="protein sequence ID" value="AAQ00853.1"/>
    <property type="molecule type" value="Genomic_DNA"/>
</dbReference>
<dbReference type="RefSeq" id="NP_876200.1">
    <property type="nucleotide sequence ID" value="NC_005042.1"/>
</dbReference>
<dbReference type="RefSeq" id="WP_011125958.1">
    <property type="nucleotide sequence ID" value="NC_005042.1"/>
</dbReference>
<dbReference type="SMR" id="Q7V9M1"/>
<dbReference type="STRING" id="167539.Pro_1809"/>
<dbReference type="EnsemblBacteria" id="AAQ00853">
    <property type="protein sequence ID" value="AAQ00853"/>
    <property type="gene ID" value="Pro_1809"/>
</dbReference>
<dbReference type="KEGG" id="pma:Pro_1809"/>
<dbReference type="PATRIC" id="fig|167539.5.peg.1911"/>
<dbReference type="eggNOG" id="COG0556">
    <property type="taxonomic scope" value="Bacteria"/>
</dbReference>
<dbReference type="HOGENOM" id="CLU_009621_2_1_3"/>
<dbReference type="OrthoDB" id="9806651at2"/>
<dbReference type="Proteomes" id="UP000001420">
    <property type="component" value="Chromosome"/>
</dbReference>
<dbReference type="GO" id="GO:0005737">
    <property type="term" value="C:cytoplasm"/>
    <property type="evidence" value="ECO:0007669"/>
    <property type="project" value="UniProtKB-SubCell"/>
</dbReference>
<dbReference type="GO" id="GO:0009380">
    <property type="term" value="C:excinuclease repair complex"/>
    <property type="evidence" value="ECO:0007669"/>
    <property type="project" value="InterPro"/>
</dbReference>
<dbReference type="GO" id="GO:0005524">
    <property type="term" value="F:ATP binding"/>
    <property type="evidence" value="ECO:0007669"/>
    <property type="project" value="UniProtKB-UniRule"/>
</dbReference>
<dbReference type="GO" id="GO:0016887">
    <property type="term" value="F:ATP hydrolysis activity"/>
    <property type="evidence" value="ECO:0007669"/>
    <property type="project" value="InterPro"/>
</dbReference>
<dbReference type="GO" id="GO:0003677">
    <property type="term" value="F:DNA binding"/>
    <property type="evidence" value="ECO:0007669"/>
    <property type="project" value="UniProtKB-UniRule"/>
</dbReference>
<dbReference type="GO" id="GO:0009381">
    <property type="term" value="F:excinuclease ABC activity"/>
    <property type="evidence" value="ECO:0007669"/>
    <property type="project" value="UniProtKB-UniRule"/>
</dbReference>
<dbReference type="GO" id="GO:0006289">
    <property type="term" value="P:nucleotide-excision repair"/>
    <property type="evidence" value="ECO:0007669"/>
    <property type="project" value="UniProtKB-UniRule"/>
</dbReference>
<dbReference type="GO" id="GO:0009432">
    <property type="term" value="P:SOS response"/>
    <property type="evidence" value="ECO:0007669"/>
    <property type="project" value="UniProtKB-UniRule"/>
</dbReference>
<dbReference type="CDD" id="cd17916">
    <property type="entry name" value="DEXHc_UvrB"/>
    <property type="match status" value="1"/>
</dbReference>
<dbReference type="CDD" id="cd18790">
    <property type="entry name" value="SF2_C_UvrB"/>
    <property type="match status" value="1"/>
</dbReference>
<dbReference type="Gene3D" id="3.40.50.300">
    <property type="entry name" value="P-loop containing nucleotide triphosphate hydrolases"/>
    <property type="match status" value="3"/>
</dbReference>
<dbReference type="Gene3D" id="4.10.860.10">
    <property type="entry name" value="UVR domain"/>
    <property type="match status" value="1"/>
</dbReference>
<dbReference type="HAMAP" id="MF_00204">
    <property type="entry name" value="UvrB"/>
    <property type="match status" value="1"/>
</dbReference>
<dbReference type="InterPro" id="IPR006935">
    <property type="entry name" value="Helicase/UvrB_N"/>
</dbReference>
<dbReference type="InterPro" id="IPR014001">
    <property type="entry name" value="Helicase_ATP-bd"/>
</dbReference>
<dbReference type="InterPro" id="IPR001650">
    <property type="entry name" value="Helicase_C-like"/>
</dbReference>
<dbReference type="InterPro" id="IPR027417">
    <property type="entry name" value="P-loop_NTPase"/>
</dbReference>
<dbReference type="InterPro" id="IPR001943">
    <property type="entry name" value="UVR_dom"/>
</dbReference>
<dbReference type="InterPro" id="IPR036876">
    <property type="entry name" value="UVR_dom_sf"/>
</dbReference>
<dbReference type="InterPro" id="IPR004807">
    <property type="entry name" value="UvrB"/>
</dbReference>
<dbReference type="InterPro" id="IPR041471">
    <property type="entry name" value="UvrB_inter"/>
</dbReference>
<dbReference type="InterPro" id="IPR024759">
    <property type="entry name" value="UvrB_YAD/RRR_dom"/>
</dbReference>
<dbReference type="NCBIfam" id="NF003673">
    <property type="entry name" value="PRK05298.1"/>
    <property type="match status" value="1"/>
</dbReference>
<dbReference type="NCBIfam" id="TIGR00631">
    <property type="entry name" value="uvrb"/>
    <property type="match status" value="1"/>
</dbReference>
<dbReference type="PANTHER" id="PTHR24029">
    <property type="entry name" value="UVRABC SYSTEM PROTEIN B"/>
    <property type="match status" value="1"/>
</dbReference>
<dbReference type="PANTHER" id="PTHR24029:SF0">
    <property type="entry name" value="UVRABC SYSTEM PROTEIN B"/>
    <property type="match status" value="1"/>
</dbReference>
<dbReference type="Pfam" id="PF00271">
    <property type="entry name" value="Helicase_C"/>
    <property type="match status" value="1"/>
</dbReference>
<dbReference type="Pfam" id="PF04851">
    <property type="entry name" value="ResIII"/>
    <property type="match status" value="1"/>
</dbReference>
<dbReference type="Pfam" id="PF02151">
    <property type="entry name" value="UVR"/>
    <property type="match status" value="1"/>
</dbReference>
<dbReference type="Pfam" id="PF12344">
    <property type="entry name" value="UvrB"/>
    <property type="match status" value="1"/>
</dbReference>
<dbReference type="Pfam" id="PF17757">
    <property type="entry name" value="UvrB_inter"/>
    <property type="match status" value="1"/>
</dbReference>
<dbReference type="SMART" id="SM00487">
    <property type="entry name" value="DEXDc"/>
    <property type="match status" value="1"/>
</dbReference>
<dbReference type="SMART" id="SM00490">
    <property type="entry name" value="HELICc"/>
    <property type="match status" value="1"/>
</dbReference>
<dbReference type="SUPFAM" id="SSF46600">
    <property type="entry name" value="C-terminal UvrC-binding domain of UvrB"/>
    <property type="match status" value="1"/>
</dbReference>
<dbReference type="SUPFAM" id="SSF52540">
    <property type="entry name" value="P-loop containing nucleoside triphosphate hydrolases"/>
    <property type="match status" value="2"/>
</dbReference>
<dbReference type="PROSITE" id="PS51192">
    <property type="entry name" value="HELICASE_ATP_BIND_1"/>
    <property type="match status" value="1"/>
</dbReference>
<dbReference type="PROSITE" id="PS51194">
    <property type="entry name" value="HELICASE_CTER"/>
    <property type="match status" value="1"/>
</dbReference>
<dbReference type="PROSITE" id="PS50151">
    <property type="entry name" value="UVR"/>
    <property type="match status" value="1"/>
</dbReference>
<name>UVRB_PROMA</name>
<reference key="1">
    <citation type="journal article" date="2003" name="Proc. Natl. Acad. Sci. U.S.A.">
        <title>Genome sequence of the cyanobacterium Prochlorococcus marinus SS120, a nearly minimal oxyphototrophic genome.</title>
        <authorList>
            <person name="Dufresne A."/>
            <person name="Salanoubat M."/>
            <person name="Partensky F."/>
            <person name="Artiguenave F."/>
            <person name="Axmann I.M."/>
            <person name="Barbe V."/>
            <person name="Duprat S."/>
            <person name="Galperin M.Y."/>
            <person name="Koonin E.V."/>
            <person name="Le Gall F."/>
            <person name="Makarova K.S."/>
            <person name="Ostrowski M."/>
            <person name="Oztas S."/>
            <person name="Robert C."/>
            <person name="Rogozin I.B."/>
            <person name="Scanlan D.J."/>
            <person name="Tandeau de Marsac N."/>
            <person name="Weissenbach J."/>
            <person name="Wincker P."/>
            <person name="Wolf Y.I."/>
            <person name="Hess W.R."/>
        </authorList>
    </citation>
    <scope>NUCLEOTIDE SEQUENCE [LARGE SCALE GENOMIC DNA]</scope>
    <source>
        <strain>SARG / CCMP1375 / SS120</strain>
    </source>
</reference>
<accession>Q7V9M1</accession>
<keyword id="KW-0067">ATP-binding</keyword>
<keyword id="KW-0963">Cytoplasm</keyword>
<keyword id="KW-0227">DNA damage</keyword>
<keyword id="KW-0228">DNA excision</keyword>
<keyword id="KW-0234">DNA repair</keyword>
<keyword id="KW-0267">Excision nuclease</keyword>
<keyword id="KW-0547">Nucleotide-binding</keyword>
<keyword id="KW-1185">Reference proteome</keyword>
<keyword id="KW-0742">SOS response</keyword>
<organism>
    <name type="scientific">Prochlorococcus marinus (strain SARG / CCMP1375 / SS120)</name>
    <dbReference type="NCBI Taxonomy" id="167539"/>
    <lineage>
        <taxon>Bacteria</taxon>
        <taxon>Bacillati</taxon>
        <taxon>Cyanobacteriota</taxon>
        <taxon>Cyanophyceae</taxon>
        <taxon>Synechococcales</taxon>
        <taxon>Prochlorococcaceae</taxon>
        <taxon>Prochlorococcus</taxon>
    </lineage>
</organism>
<gene>
    <name evidence="1" type="primary">uvrB</name>
    <name type="ordered locus">Pro_1809</name>
</gene>